<feature type="signal peptide" evidence="3">
    <location>
        <begin position="1"/>
        <end position="24"/>
    </location>
</feature>
<feature type="chain" id="PRO_0000011801" description="Putative xyloglucan endotransglucosylase/hydrolase protein 1">
    <location>
        <begin position="25"/>
        <end position="295"/>
    </location>
</feature>
<feature type="domain" description="GH16" evidence="5">
    <location>
        <begin position="27"/>
        <end position="225"/>
    </location>
</feature>
<feature type="active site" description="Nucleophile" evidence="2">
    <location>
        <position position="113"/>
    </location>
</feature>
<feature type="active site" description="Proton donor" evidence="2">
    <location>
        <position position="117"/>
    </location>
</feature>
<feature type="binding site" evidence="2">
    <location>
        <position position="117"/>
    </location>
    <ligand>
        <name>xyloglucan</name>
        <dbReference type="ChEBI" id="CHEBI:18233"/>
    </ligand>
</feature>
<feature type="binding site" evidence="2">
    <location>
        <begin position="129"/>
        <end position="131"/>
    </location>
    <ligand>
        <name>xyloglucan</name>
        <dbReference type="ChEBI" id="CHEBI:18233"/>
    </ligand>
</feature>
<feature type="binding site" evidence="2">
    <location>
        <begin position="139"/>
        <end position="141"/>
    </location>
    <ligand>
        <name>xyloglucan</name>
        <dbReference type="ChEBI" id="CHEBI:18233"/>
    </ligand>
</feature>
<feature type="binding site" evidence="2">
    <location>
        <begin position="204"/>
        <end position="205"/>
    </location>
    <ligand>
        <name>xyloglucan</name>
        <dbReference type="ChEBI" id="CHEBI:18233"/>
    </ligand>
</feature>
<feature type="binding site" evidence="2">
    <location>
        <position position="209"/>
    </location>
    <ligand>
        <name>xyloglucan</name>
        <dbReference type="ChEBI" id="CHEBI:18233"/>
    </ligand>
</feature>
<feature type="binding site" evidence="2">
    <location>
        <position position="283"/>
    </location>
    <ligand>
        <name>xyloglucan</name>
        <dbReference type="ChEBI" id="CHEBI:18233"/>
    </ligand>
</feature>
<feature type="site" description="Important for catalytic activity" evidence="2">
    <location>
        <position position="115"/>
    </location>
</feature>
<feature type="glycosylation site" description="N-linked (GlcNAc...) asparagine" evidence="4">
    <location>
        <position position="180"/>
    </location>
</feature>
<feature type="glycosylation site" description="N-linked (GlcNAc...) asparagine" evidence="4">
    <location>
        <position position="215"/>
    </location>
</feature>
<feature type="glycosylation site" description="N-linked (GlcNAc...) asparagine" evidence="4">
    <location>
        <position position="229"/>
    </location>
</feature>
<feature type="disulfide bond" evidence="2">
    <location>
        <begin position="233"/>
        <end position="242"/>
    </location>
</feature>
<feature type="disulfide bond" evidence="2">
    <location>
        <begin position="278"/>
        <end position="291"/>
    </location>
</feature>
<gene>
    <name type="primary">XTH1</name>
    <name type="ordered locus">At4g13080</name>
    <name type="ORF">F25G13.170</name>
</gene>
<protein>
    <recommendedName>
        <fullName>Putative xyloglucan endotransglucosylase/hydrolase protein 1</fullName>
        <shortName>At-XTH1</shortName>
        <shortName>XTH-1</shortName>
        <ecNumber>2.4.1.207</ecNumber>
    </recommendedName>
</protein>
<reference key="1">
    <citation type="journal article" date="1999" name="Nature">
        <title>Sequence and analysis of chromosome 4 of the plant Arabidopsis thaliana.</title>
        <authorList>
            <person name="Mayer K.F.X."/>
            <person name="Schueller C."/>
            <person name="Wambutt R."/>
            <person name="Murphy G."/>
            <person name="Volckaert G."/>
            <person name="Pohl T."/>
            <person name="Duesterhoeft A."/>
            <person name="Stiekema W."/>
            <person name="Entian K.-D."/>
            <person name="Terryn N."/>
            <person name="Harris B."/>
            <person name="Ansorge W."/>
            <person name="Brandt P."/>
            <person name="Grivell L.A."/>
            <person name="Rieger M."/>
            <person name="Weichselgartner M."/>
            <person name="de Simone V."/>
            <person name="Obermaier B."/>
            <person name="Mache R."/>
            <person name="Mueller M."/>
            <person name="Kreis M."/>
            <person name="Delseny M."/>
            <person name="Puigdomenech P."/>
            <person name="Watson M."/>
            <person name="Schmidtheini T."/>
            <person name="Reichert B."/>
            <person name="Portetelle D."/>
            <person name="Perez-Alonso M."/>
            <person name="Boutry M."/>
            <person name="Bancroft I."/>
            <person name="Vos P."/>
            <person name="Hoheisel J."/>
            <person name="Zimmermann W."/>
            <person name="Wedler H."/>
            <person name="Ridley P."/>
            <person name="Langham S.-A."/>
            <person name="McCullagh B."/>
            <person name="Bilham L."/>
            <person name="Robben J."/>
            <person name="van der Schueren J."/>
            <person name="Grymonprez B."/>
            <person name="Chuang Y.-J."/>
            <person name="Vandenbussche F."/>
            <person name="Braeken M."/>
            <person name="Weltjens I."/>
            <person name="Voet M."/>
            <person name="Bastiaens I."/>
            <person name="Aert R."/>
            <person name="Defoor E."/>
            <person name="Weitzenegger T."/>
            <person name="Bothe G."/>
            <person name="Ramsperger U."/>
            <person name="Hilbert H."/>
            <person name="Braun M."/>
            <person name="Holzer E."/>
            <person name="Brandt A."/>
            <person name="Peters S."/>
            <person name="van Staveren M."/>
            <person name="Dirkse W."/>
            <person name="Mooijman P."/>
            <person name="Klein Lankhorst R."/>
            <person name="Rose M."/>
            <person name="Hauf J."/>
            <person name="Koetter P."/>
            <person name="Berneiser S."/>
            <person name="Hempel S."/>
            <person name="Feldpausch M."/>
            <person name="Lamberth S."/>
            <person name="Van den Daele H."/>
            <person name="De Keyser A."/>
            <person name="Buysshaert C."/>
            <person name="Gielen J."/>
            <person name="Villarroel R."/>
            <person name="De Clercq R."/>
            <person name="van Montagu M."/>
            <person name="Rogers J."/>
            <person name="Cronin A."/>
            <person name="Quail M.A."/>
            <person name="Bray-Allen S."/>
            <person name="Clark L."/>
            <person name="Doggett J."/>
            <person name="Hall S."/>
            <person name="Kay M."/>
            <person name="Lennard N."/>
            <person name="McLay K."/>
            <person name="Mayes R."/>
            <person name="Pettett A."/>
            <person name="Rajandream M.A."/>
            <person name="Lyne M."/>
            <person name="Benes V."/>
            <person name="Rechmann S."/>
            <person name="Borkova D."/>
            <person name="Bloecker H."/>
            <person name="Scharfe M."/>
            <person name="Grimm M."/>
            <person name="Loehnert T.-H."/>
            <person name="Dose S."/>
            <person name="de Haan M."/>
            <person name="Maarse A.C."/>
            <person name="Schaefer M."/>
            <person name="Mueller-Auer S."/>
            <person name="Gabel C."/>
            <person name="Fuchs M."/>
            <person name="Fartmann B."/>
            <person name="Granderath K."/>
            <person name="Dauner D."/>
            <person name="Herzl A."/>
            <person name="Neumann S."/>
            <person name="Argiriou A."/>
            <person name="Vitale D."/>
            <person name="Liguori R."/>
            <person name="Piravandi E."/>
            <person name="Massenet O."/>
            <person name="Quigley F."/>
            <person name="Clabauld G."/>
            <person name="Muendlein A."/>
            <person name="Felber R."/>
            <person name="Schnabl S."/>
            <person name="Hiller R."/>
            <person name="Schmidt W."/>
            <person name="Lecharny A."/>
            <person name="Aubourg S."/>
            <person name="Chefdor F."/>
            <person name="Cooke R."/>
            <person name="Berger C."/>
            <person name="Monfort A."/>
            <person name="Casacuberta E."/>
            <person name="Gibbons T."/>
            <person name="Weber N."/>
            <person name="Vandenbol M."/>
            <person name="Bargues M."/>
            <person name="Terol J."/>
            <person name="Torres A."/>
            <person name="Perez-Perez A."/>
            <person name="Purnelle B."/>
            <person name="Bent E."/>
            <person name="Johnson S."/>
            <person name="Tacon D."/>
            <person name="Jesse T."/>
            <person name="Heijnen L."/>
            <person name="Schwarz S."/>
            <person name="Scholler P."/>
            <person name="Heber S."/>
            <person name="Francs P."/>
            <person name="Bielke C."/>
            <person name="Frishman D."/>
            <person name="Haase D."/>
            <person name="Lemcke K."/>
            <person name="Mewes H.-W."/>
            <person name="Stocker S."/>
            <person name="Zaccaria P."/>
            <person name="Bevan M."/>
            <person name="Wilson R.K."/>
            <person name="de la Bastide M."/>
            <person name="Habermann K."/>
            <person name="Parnell L."/>
            <person name="Dedhia N."/>
            <person name="Gnoj L."/>
            <person name="Schutz K."/>
            <person name="Huang E."/>
            <person name="Spiegel L."/>
            <person name="Sekhon M."/>
            <person name="Murray J."/>
            <person name="Sheet P."/>
            <person name="Cordes M."/>
            <person name="Abu-Threideh J."/>
            <person name="Stoneking T."/>
            <person name="Kalicki J."/>
            <person name="Graves T."/>
            <person name="Harmon G."/>
            <person name="Edwards J."/>
            <person name="Latreille P."/>
            <person name="Courtney L."/>
            <person name="Cloud J."/>
            <person name="Abbott A."/>
            <person name="Scott K."/>
            <person name="Johnson D."/>
            <person name="Minx P."/>
            <person name="Bentley D."/>
            <person name="Fulton B."/>
            <person name="Miller N."/>
            <person name="Greco T."/>
            <person name="Kemp K."/>
            <person name="Kramer J."/>
            <person name="Fulton L."/>
            <person name="Mardis E."/>
            <person name="Dante M."/>
            <person name="Pepin K."/>
            <person name="Hillier L.W."/>
            <person name="Nelson J."/>
            <person name="Spieth J."/>
            <person name="Ryan E."/>
            <person name="Andrews S."/>
            <person name="Geisel C."/>
            <person name="Layman D."/>
            <person name="Du H."/>
            <person name="Ali J."/>
            <person name="Berghoff A."/>
            <person name="Jones K."/>
            <person name="Drone K."/>
            <person name="Cotton M."/>
            <person name="Joshu C."/>
            <person name="Antonoiu B."/>
            <person name="Zidanic M."/>
            <person name="Strong C."/>
            <person name="Sun H."/>
            <person name="Lamar B."/>
            <person name="Yordan C."/>
            <person name="Ma P."/>
            <person name="Zhong J."/>
            <person name="Preston R."/>
            <person name="Vil D."/>
            <person name="Shekher M."/>
            <person name="Matero A."/>
            <person name="Shah R."/>
            <person name="Swaby I.K."/>
            <person name="O'Shaughnessy A."/>
            <person name="Rodriguez M."/>
            <person name="Hoffman J."/>
            <person name="Till S."/>
            <person name="Granat S."/>
            <person name="Shohdy N."/>
            <person name="Hasegawa A."/>
            <person name="Hameed A."/>
            <person name="Lodhi M."/>
            <person name="Johnson A."/>
            <person name="Chen E."/>
            <person name="Marra M.A."/>
            <person name="Martienssen R."/>
            <person name="McCombie W.R."/>
        </authorList>
    </citation>
    <scope>NUCLEOTIDE SEQUENCE [LARGE SCALE GENOMIC DNA]</scope>
    <source>
        <strain>cv. Columbia</strain>
    </source>
</reference>
<reference key="2">
    <citation type="journal article" date="2017" name="Plant J.">
        <title>Araport11: a complete reannotation of the Arabidopsis thaliana reference genome.</title>
        <authorList>
            <person name="Cheng C.Y."/>
            <person name="Krishnakumar V."/>
            <person name="Chan A.P."/>
            <person name="Thibaud-Nissen F."/>
            <person name="Schobel S."/>
            <person name="Town C.D."/>
        </authorList>
    </citation>
    <scope>GENOME REANNOTATION</scope>
    <source>
        <strain>cv. Columbia</strain>
    </source>
</reference>
<reference key="3">
    <citation type="journal article" date="2002" name="Plant Cell Physiol.">
        <title>The XTH family of enzymes involved in xyloglucan endotransglucosylation and endohydrolysis: current perspectives and a new unifying nomenclature.</title>
        <authorList>
            <person name="Rose J.K.C."/>
            <person name="Braam J."/>
            <person name="Fry S.C."/>
            <person name="Nishitani K."/>
        </authorList>
    </citation>
    <scope>NOMENCLATURE</scope>
</reference>
<name>XTH1_ARATH</name>
<keyword id="KW-0052">Apoplast</keyword>
<keyword id="KW-0134">Cell wall</keyword>
<keyword id="KW-0961">Cell wall biogenesis/degradation</keyword>
<keyword id="KW-1015">Disulfide bond</keyword>
<keyword id="KW-0325">Glycoprotein</keyword>
<keyword id="KW-0326">Glycosidase</keyword>
<keyword id="KW-0378">Hydrolase</keyword>
<keyword id="KW-1185">Reference proteome</keyword>
<keyword id="KW-0964">Secreted</keyword>
<keyword id="KW-0732">Signal</keyword>
<keyword id="KW-0808">Transferase</keyword>
<accession>Q9SV61</accession>
<evidence type="ECO:0000250" key="1"/>
<evidence type="ECO:0000250" key="2">
    <source>
        <dbReference type="UniProtKB" id="Q8GZD5"/>
    </source>
</evidence>
<evidence type="ECO:0000255" key="3"/>
<evidence type="ECO:0000255" key="4">
    <source>
        <dbReference type="PROSITE-ProRule" id="PRU00498"/>
    </source>
</evidence>
<evidence type="ECO:0000255" key="5">
    <source>
        <dbReference type="PROSITE-ProRule" id="PRU01098"/>
    </source>
</evidence>
<evidence type="ECO:0000305" key="6"/>
<comment type="function">
    <text evidence="1">May catalyze xyloglucan endohydrolysis (XEH) and/or endotransglycosylation (XET). Cleaves and religates xyloglucan polymers, an essential constituent of the primary cell wall, and thereby participates in cell wall construction of growing tissues (By similarity).</text>
</comment>
<comment type="catalytic activity">
    <reaction>
        <text>breaks a beta-(1-&gt;4) bond in the backbone of a xyloglucan and transfers the xyloglucanyl segment on to O-4 of the non-reducing terminal glucose residue of an acceptor, which can be a xyloglucan or an oligosaccharide of xyloglucan.</text>
        <dbReference type="EC" id="2.4.1.207"/>
    </reaction>
</comment>
<comment type="subcellular location">
    <subcellularLocation>
        <location evidence="6">Secreted</location>
        <location evidence="6">Cell wall</location>
    </subcellularLocation>
    <subcellularLocation>
        <location evidence="6">Secreted</location>
        <location evidence="6">Extracellular space</location>
        <location evidence="6">Apoplast</location>
    </subcellularLocation>
</comment>
<comment type="PTM">
    <text evidence="1">Contains at least one intrachain disulfide bond essential for its enzymatic activity.</text>
</comment>
<comment type="similarity">
    <text evidence="6">Belongs to the glycosyl hydrolase 16 family. XTH group 1 subfamily.</text>
</comment>
<dbReference type="EC" id="2.4.1.207"/>
<dbReference type="EMBL" id="AL079349">
    <property type="protein sequence ID" value="CAB45507.1"/>
    <property type="molecule type" value="Genomic_DNA"/>
</dbReference>
<dbReference type="EMBL" id="AL161535">
    <property type="protein sequence ID" value="CAB78350.1"/>
    <property type="molecule type" value="Genomic_DNA"/>
</dbReference>
<dbReference type="EMBL" id="CP002687">
    <property type="protein sequence ID" value="AEE83228.2"/>
    <property type="molecule type" value="Genomic_DNA"/>
</dbReference>
<dbReference type="PIR" id="T10210">
    <property type="entry name" value="T10210"/>
</dbReference>
<dbReference type="RefSeq" id="NP_193044.3">
    <property type="nucleotide sequence ID" value="NM_117377.3"/>
</dbReference>
<dbReference type="SMR" id="Q9SV61"/>
<dbReference type="FunCoup" id="Q9SV61">
    <property type="interactions" value="46"/>
</dbReference>
<dbReference type="STRING" id="3702.Q9SV61"/>
<dbReference type="CAZy" id="GH16">
    <property type="family name" value="Glycoside Hydrolase Family 16"/>
</dbReference>
<dbReference type="GlyCosmos" id="Q9SV61">
    <property type="glycosylation" value="3 sites, No reported glycans"/>
</dbReference>
<dbReference type="GlyGen" id="Q9SV61">
    <property type="glycosylation" value="3 sites"/>
</dbReference>
<dbReference type="PaxDb" id="3702-AT4G13080.1"/>
<dbReference type="ProteomicsDB" id="242796"/>
<dbReference type="EnsemblPlants" id="AT4G13080.1">
    <property type="protein sequence ID" value="AT4G13080.1"/>
    <property type="gene ID" value="AT4G13080"/>
</dbReference>
<dbReference type="GeneID" id="826922"/>
<dbReference type="Gramene" id="AT4G13080.1">
    <property type="protein sequence ID" value="AT4G13080.1"/>
    <property type="gene ID" value="AT4G13080"/>
</dbReference>
<dbReference type="KEGG" id="ath:AT4G13080"/>
<dbReference type="Araport" id="AT4G13080"/>
<dbReference type="TAIR" id="AT4G13080">
    <property type="gene designation" value="XTH1"/>
</dbReference>
<dbReference type="eggNOG" id="KOG0017">
    <property type="taxonomic scope" value="Eukaryota"/>
</dbReference>
<dbReference type="HOGENOM" id="CLU_048041_2_1_1"/>
<dbReference type="InParanoid" id="Q9SV61"/>
<dbReference type="OMA" id="FPAKPMR"/>
<dbReference type="BioCyc" id="ARA:AT4G13080-MONOMER"/>
<dbReference type="PRO" id="PR:Q9SV61"/>
<dbReference type="Proteomes" id="UP000006548">
    <property type="component" value="Chromosome 4"/>
</dbReference>
<dbReference type="ExpressionAtlas" id="Q9SV61">
    <property type="expression patterns" value="baseline and differential"/>
</dbReference>
<dbReference type="GO" id="GO:0048046">
    <property type="term" value="C:apoplast"/>
    <property type="evidence" value="ECO:0007669"/>
    <property type="project" value="UniProtKB-SubCell"/>
</dbReference>
<dbReference type="GO" id="GO:0004553">
    <property type="term" value="F:hydrolase activity, hydrolyzing O-glycosyl compounds"/>
    <property type="evidence" value="ECO:0007669"/>
    <property type="project" value="InterPro"/>
</dbReference>
<dbReference type="GO" id="GO:0030247">
    <property type="term" value="F:polysaccharide binding"/>
    <property type="evidence" value="ECO:0000250"/>
    <property type="project" value="UniProtKB"/>
</dbReference>
<dbReference type="GO" id="GO:0016762">
    <property type="term" value="F:xyloglucan:xyloglucosyl transferase activity"/>
    <property type="evidence" value="ECO:0007669"/>
    <property type="project" value="UniProtKB-EC"/>
</dbReference>
<dbReference type="GO" id="GO:0042546">
    <property type="term" value="P:cell wall biogenesis"/>
    <property type="evidence" value="ECO:0007669"/>
    <property type="project" value="InterPro"/>
</dbReference>
<dbReference type="GO" id="GO:0071555">
    <property type="term" value="P:cell wall organization"/>
    <property type="evidence" value="ECO:0007669"/>
    <property type="project" value="UniProtKB-KW"/>
</dbReference>
<dbReference type="GO" id="GO:0010411">
    <property type="term" value="P:xyloglucan metabolic process"/>
    <property type="evidence" value="ECO:0007669"/>
    <property type="project" value="InterPro"/>
</dbReference>
<dbReference type="CDD" id="cd02176">
    <property type="entry name" value="GH16_XET"/>
    <property type="match status" value="1"/>
</dbReference>
<dbReference type="FunFam" id="2.60.120.200:FF:000025">
    <property type="entry name" value="Xyloglucan endotransglucosylase/hydrolase"/>
    <property type="match status" value="1"/>
</dbReference>
<dbReference type="Gene3D" id="2.60.120.200">
    <property type="match status" value="1"/>
</dbReference>
<dbReference type="InterPro" id="IPR044791">
    <property type="entry name" value="Beta-glucanase/XTH"/>
</dbReference>
<dbReference type="InterPro" id="IPR008264">
    <property type="entry name" value="Beta_glucanase"/>
</dbReference>
<dbReference type="InterPro" id="IPR013320">
    <property type="entry name" value="ConA-like_dom_sf"/>
</dbReference>
<dbReference type="InterPro" id="IPR000757">
    <property type="entry name" value="GH16"/>
</dbReference>
<dbReference type="InterPro" id="IPR010713">
    <property type="entry name" value="XET_C"/>
</dbReference>
<dbReference type="InterPro" id="IPR016455">
    <property type="entry name" value="XTH"/>
</dbReference>
<dbReference type="PANTHER" id="PTHR31062">
    <property type="entry name" value="XYLOGLUCAN ENDOTRANSGLUCOSYLASE/HYDROLASE PROTEIN 8-RELATED"/>
    <property type="match status" value="1"/>
</dbReference>
<dbReference type="Pfam" id="PF00722">
    <property type="entry name" value="Glyco_hydro_16"/>
    <property type="match status" value="1"/>
</dbReference>
<dbReference type="Pfam" id="PF06955">
    <property type="entry name" value="XET_C"/>
    <property type="match status" value="1"/>
</dbReference>
<dbReference type="PIRSF" id="PIRSF005604">
    <property type="entry name" value="XET"/>
    <property type="match status" value="1"/>
</dbReference>
<dbReference type="PRINTS" id="PR00737">
    <property type="entry name" value="GLHYDRLASE16"/>
</dbReference>
<dbReference type="SUPFAM" id="SSF49899">
    <property type="entry name" value="Concanavalin A-like lectins/glucanases"/>
    <property type="match status" value="1"/>
</dbReference>
<dbReference type="PROSITE" id="PS51762">
    <property type="entry name" value="GH16_2"/>
    <property type="match status" value="1"/>
</dbReference>
<sequence length="295" mass="33621">MNKMEYLSIFGFVSVLYLIIRVDARAYEVNGIDQSKVGFDDNYVVTWGQNNVLKLNQGKEVQLSLDHSSGSGFESKNHYESGFFQIRIKVPPKDTSGVVTAFYLTSKGNTHDEVDFEFLGNKEGKLAVQTNVFTNGKGNREQKLALWFDPSKDFHTYAILWNPYQIVLYVDNIPVRVFKNTTSQGMNYPSKPMQVVVSLWNGENWATDGGKSKINWSLAPFKANFQGFNNSGCFTNAEKNACGSSAYWWNTGSYSKLSDSEQKAYTNVRQKYMNYDYCSDKVRFHVPPSECKWNN</sequence>
<organism>
    <name type="scientific">Arabidopsis thaliana</name>
    <name type="common">Mouse-ear cress</name>
    <dbReference type="NCBI Taxonomy" id="3702"/>
    <lineage>
        <taxon>Eukaryota</taxon>
        <taxon>Viridiplantae</taxon>
        <taxon>Streptophyta</taxon>
        <taxon>Embryophyta</taxon>
        <taxon>Tracheophyta</taxon>
        <taxon>Spermatophyta</taxon>
        <taxon>Magnoliopsida</taxon>
        <taxon>eudicotyledons</taxon>
        <taxon>Gunneridae</taxon>
        <taxon>Pentapetalae</taxon>
        <taxon>rosids</taxon>
        <taxon>malvids</taxon>
        <taxon>Brassicales</taxon>
        <taxon>Brassicaceae</taxon>
        <taxon>Camelineae</taxon>
        <taxon>Arabidopsis</taxon>
    </lineage>
</organism>
<proteinExistence type="inferred from homology"/>